<proteinExistence type="inferred from homology"/>
<protein>
    <recommendedName>
        <fullName evidence="1">CTP synthase</fullName>
        <ecNumber evidence="1">6.3.4.2</ecNumber>
    </recommendedName>
    <alternativeName>
        <fullName evidence="1">Cytidine 5'-triphosphate synthase</fullName>
    </alternativeName>
    <alternativeName>
        <fullName evidence="1">Cytidine triphosphate synthetase</fullName>
        <shortName evidence="1">CTP synthetase</shortName>
        <shortName evidence="1">CTPS</shortName>
    </alternativeName>
    <alternativeName>
        <fullName evidence="1">UTP--ammonia ligase</fullName>
    </alternativeName>
</protein>
<accession>A4SCI7</accession>
<feature type="chain" id="PRO_1000139529" description="CTP synthase">
    <location>
        <begin position="1"/>
        <end position="594"/>
    </location>
</feature>
<feature type="domain" description="Glutamine amidotransferase type-1" evidence="1">
    <location>
        <begin position="299"/>
        <end position="543"/>
    </location>
</feature>
<feature type="region of interest" description="Amidoligase domain" evidence="1">
    <location>
        <begin position="1"/>
        <end position="272"/>
    </location>
</feature>
<feature type="region of interest" description="Disordered" evidence="2">
    <location>
        <begin position="562"/>
        <end position="594"/>
    </location>
</feature>
<feature type="compositionally biased region" description="Low complexity" evidence="2">
    <location>
        <begin position="562"/>
        <end position="571"/>
    </location>
</feature>
<feature type="compositionally biased region" description="Basic and acidic residues" evidence="2">
    <location>
        <begin position="584"/>
        <end position="594"/>
    </location>
</feature>
<feature type="active site" description="Nucleophile; for glutamine hydrolysis" evidence="1">
    <location>
        <position position="390"/>
    </location>
</feature>
<feature type="active site" evidence="1">
    <location>
        <position position="516"/>
    </location>
</feature>
<feature type="active site" evidence="1">
    <location>
        <position position="518"/>
    </location>
</feature>
<feature type="binding site" evidence="1">
    <location>
        <position position="18"/>
    </location>
    <ligand>
        <name>CTP</name>
        <dbReference type="ChEBI" id="CHEBI:37563"/>
        <note>allosteric inhibitor</note>
    </ligand>
</feature>
<feature type="binding site" evidence="1">
    <location>
        <position position="18"/>
    </location>
    <ligand>
        <name>UTP</name>
        <dbReference type="ChEBI" id="CHEBI:46398"/>
    </ligand>
</feature>
<feature type="binding site" evidence="1">
    <location>
        <begin position="19"/>
        <end position="24"/>
    </location>
    <ligand>
        <name>ATP</name>
        <dbReference type="ChEBI" id="CHEBI:30616"/>
    </ligand>
</feature>
<feature type="binding site" evidence="1">
    <location>
        <position position="59"/>
    </location>
    <ligand>
        <name>L-glutamine</name>
        <dbReference type="ChEBI" id="CHEBI:58359"/>
    </ligand>
</feature>
<feature type="binding site" evidence="1">
    <location>
        <position position="76"/>
    </location>
    <ligand>
        <name>ATP</name>
        <dbReference type="ChEBI" id="CHEBI:30616"/>
    </ligand>
</feature>
<feature type="binding site" evidence="1">
    <location>
        <position position="76"/>
    </location>
    <ligand>
        <name>Mg(2+)</name>
        <dbReference type="ChEBI" id="CHEBI:18420"/>
    </ligand>
</feature>
<feature type="binding site" evidence="1">
    <location>
        <position position="146"/>
    </location>
    <ligand>
        <name>Mg(2+)</name>
        <dbReference type="ChEBI" id="CHEBI:18420"/>
    </ligand>
</feature>
<feature type="binding site" evidence="1">
    <location>
        <begin position="153"/>
        <end position="155"/>
    </location>
    <ligand>
        <name>CTP</name>
        <dbReference type="ChEBI" id="CHEBI:37563"/>
        <note>allosteric inhibitor</note>
    </ligand>
</feature>
<feature type="binding site" evidence="1">
    <location>
        <begin position="193"/>
        <end position="198"/>
    </location>
    <ligand>
        <name>CTP</name>
        <dbReference type="ChEBI" id="CHEBI:37563"/>
        <note>allosteric inhibitor</note>
    </ligand>
</feature>
<feature type="binding site" evidence="1">
    <location>
        <begin position="193"/>
        <end position="198"/>
    </location>
    <ligand>
        <name>UTP</name>
        <dbReference type="ChEBI" id="CHEBI:46398"/>
    </ligand>
</feature>
<feature type="binding site" evidence="1">
    <location>
        <position position="229"/>
    </location>
    <ligand>
        <name>CTP</name>
        <dbReference type="ChEBI" id="CHEBI:37563"/>
        <note>allosteric inhibitor</note>
    </ligand>
</feature>
<feature type="binding site" evidence="1">
    <location>
        <position position="229"/>
    </location>
    <ligand>
        <name>UTP</name>
        <dbReference type="ChEBI" id="CHEBI:46398"/>
    </ligand>
</feature>
<feature type="binding site" evidence="1">
    <location>
        <position position="363"/>
    </location>
    <ligand>
        <name>L-glutamine</name>
        <dbReference type="ChEBI" id="CHEBI:58359"/>
    </ligand>
</feature>
<feature type="binding site" evidence="1">
    <location>
        <begin position="391"/>
        <end position="394"/>
    </location>
    <ligand>
        <name>L-glutamine</name>
        <dbReference type="ChEBI" id="CHEBI:58359"/>
    </ligand>
</feature>
<feature type="binding site" evidence="1">
    <location>
        <position position="414"/>
    </location>
    <ligand>
        <name>L-glutamine</name>
        <dbReference type="ChEBI" id="CHEBI:58359"/>
    </ligand>
</feature>
<feature type="binding site" evidence="1">
    <location>
        <position position="471"/>
    </location>
    <ligand>
        <name>L-glutamine</name>
        <dbReference type="ChEBI" id="CHEBI:58359"/>
    </ligand>
</feature>
<gene>
    <name evidence="1" type="primary">pyrG</name>
    <name type="ordered locus">Cvib_0173</name>
</gene>
<evidence type="ECO:0000255" key="1">
    <source>
        <dbReference type="HAMAP-Rule" id="MF_01227"/>
    </source>
</evidence>
<evidence type="ECO:0000256" key="2">
    <source>
        <dbReference type="SAM" id="MobiDB-lite"/>
    </source>
</evidence>
<reference key="1">
    <citation type="submission" date="2007-03" db="EMBL/GenBank/DDBJ databases">
        <title>Complete sequence of Prosthecochloris vibrioformis DSM 265.</title>
        <authorList>
            <consortium name="US DOE Joint Genome Institute"/>
            <person name="Copeland A."/>
            <person name="Lucas S."/>
            <person name="Lapidus A."/>
            <person name="Barry K."/>
            <person name="Detter J.C."/>
            <person name="Glavina del Rio T."/>
            <person name="Hammon N."/>
            <person name="Israni S."/>
            <person name="Pitluck S."/>
            <person name="Schmutz J."/>
            <person name="Larimer F."/>
            <person name="Land M."/>
            <person name="Hauser L."/>
            <person name="Mikhailova N."/>
            <person name="Li T."/>
            <person name="Overmann J."/>
            <person name="Schuster S.C."/>
            <person name="Bryant D.A."/>
            <person name="Richardson P."/>
        </authorList>
    </citation>
    <scope>NUCLEOTIDE SEQUENCE [LARGE SCALE GENOMIC DNA]</scope>
    <source>
        <strain>DSM 265 / 1930</strain>
    </source>
</reference>
<organism>
    <name type="scientific">Chlorobium phaeovibrioides (strain DSM 265 / 1930)</name>
    <name type="common">Prosthecochloris vibrioformis (strain DSM 265)</name>
    <dbReference type="NCBI Taxonomy" id="290318"/>
    <lineage>
        <taxon>Bacteria</taxon>
        <taxon>Pseudomonadati</taxon>
        <taxon>Chlorobiota</taxon>
        <taxon>Chlorobiia</taxon>
        <taxon>Chlorobiales</taxon>
        <taxon>Chlorobiaceae</taxon>
        <taxon>Chlorobium/Pelodictyon group</taxon>
        <taxon>Chlorobium</taxon>
    </lineage>
</organism>
<comment type="function">
    <text evidence="1">Catalyzes the ATP-dependent amination of UTP to CTP with either L-glutamine or ammonia as the source of nitrogen. Regulates intracellular CTP levels through interactions with the four ribonucleotide triphosphates.</text>
</comment>
<comment type="catalytic activity">
    <reaction evidence="1">
        <text>UTP + L-glutamine + ATP + H2O = CTP + L-glutamate + ADP + phosphate + 2 H(+)</text>
        <dbReference type="Rhea" id="RHEA:26426"/>
        <dbReference type="ChEBI" id="CHEBI:15377"/>
        <dbReference type="ChEBI" id="CHEBI:15378"/>
        <dbReference type="ChEBI" id="CHEBI:29985"/>
        <dbReference type="ChEBI" id="CHEBI:30616"/>
        <dbReference type="ChEBI" id="CHEBI:37563"/>
        <dbReference type="ChEBI" id="CHEBI:43474"/>
        <dbReference type="ChEBI" id="CHEBI:46398"/>
        <dbReference type="ChEBI" id="CHEBI:58359"/>
        <dbReference type="ChEBI" id="CHEBI:456216"/>
        <dbReference type="EC" id="6.3.4.2"/>
    </reaction>
</comment>
<comment type="catalytic activity">
    <reaction evidence="1">
        <text>L-glutamine + H2O = L-glutamate + NH4(+)</text>
        <dbReference type="Rhea" id="RHEA:15889"/>
        <dbReference type="ChEBI" id="CHEBI:15377"/>
        <dbReference type="ChEBI" id="CHEBI:28938"/>
        <dbReference type="ChEBI" id="CHEBI:29985"/>
        <dbReference type="ChEBI" id="CHEBI:58359"/>
    </reaction>
</comment>
<comment type="catalytic activity">
    <reaction evidence="1">
        <text>UTP + NH4(+) + ATP = CTP + ADP + phosphate + 2 H(+)</text>
        <dbReference type="Rhea" id="RHEA:16597"/>
        <dbReference type="ChEBI" id="CHEBI:15378"/>
        <dbReference type="ChEBI" id="CHEBI:28938"/>
        <dbReference type="ChEBI" id="CHEBI:30616"/>
        <dbReference type="ChEBI" id="CHEBI:37563"/>
        <dbReference type="ChEBI" id="CHEBI:43474"/>
        <dbReference type="ChEBI" id="CHEBI:46398"/>
        <dbReference type="ChEBI" id="CHEBI:456216"/>
    </reaction>
</comment>
<comment type="activity regulation">
    <text evidence="1">Allosterically activated by GTP, when glutamine is the substrate; GTP has no effect on the reaction when ammonia is the substrate. The allosteric effector GTP functions by stabilizing the protein conformation that binds the tetrahedral intermediate(s) formed during glutamine hydrolysis. Inhibited by the product CTP, via allosteric rather than competitive inhibition.</text>
</comment>
<comment type="pathway">
    <text evidence="1">Pyrimidine metabolism; CTP biosynthesis via de novo pathway; CTP from UDP: step 2/2.</text>
</comment>
<comment type="subunit">
    <text evidence="1">Homotetramer.</text>
</comment>
<comment type="miscellaneous">
    <text evidence="1">CTPSs have evolved a hybrid strategy for distinguishing between UTP and CTP. The overlapping regions of the product feedback inhibitory and substrate sites recognize a common feature in both compounds, the triphosphate moiety. To differentiate isosteric substrate and product pyrimidine rings, an additional pocket far from the expected kinase/ligase catalytic site, specifically recognizes the cytosine and ribose portions of the product inhibitor.</text>
</comment>
<comment type="similarity">
    <text evidence="1">Belongs to the CTP synthase family.</text>
</comment>
<name>PYRG_CHLPM</name>
<keyword id="KW-0067">ATP-binding</keyword>
<keyword id="KW-0315">Glutamine amidotransferase</keyword>
<keyword id="KW-0436">Ligase</keyword>
<keyword id="KW-0460">Magnesium</keyword>
<keyword id="KW-0479">Metal-binding</keyword>
<keyword id="KW-0547">Nucleotide-binding</keyword>
<keyword id="KW-0665">Pyrimidine biosynthesis</keyword>
<dbReference type="EC" id="6.3.4.2" evidence="1"/>
<dbReference type="EMBL" id="CP000607">
    <property type="protein sequence ID" value="ABP36196.1"/>
    <property type="molecule type" value="Genomic_DNA"/>
</dbReference>
<dbReference type="SMR" id="A4SCI7"/>
<dbReference type="STRING" id="290318.Cvib_0173"/>
<dbReference type="MEROPS" id="C26.964"/>
<dbReference type="KEGG" id="pvi:Cvib_0173"/>
<dbReference type="eggNOG" id="COG0504">
    <property type="taxonomic scope" value="Bacteria"/>
</dbReference>
<dbReference type="HOGENOM" id="CLU_011675_5_0_10"/>
<dbReference type="OrthoDB" id="9801107at2"/>
<dbReference type="UniPathway" id="UPA00159">
    <property type="reaction ID" value="UER00277"/>
</dbReference>
<dbReference type="GO" id="GO:0005829">
    <property type="term" value="C:cytosol"/>
    <property type="evidence" value="ECO:0007669"/>
    <property type="project" value="TreeGrafter"/>
</dbReference>
<dbReference type="GO" id="GO:0005524">
    <property type="term" value="F:ATP binding"/>
    <property type="evidence" value="ECO:0007669"/>
    <property type="project" value="UniProtKB-KW"/>
</dbReference>
<dbReference type="GO" id="GO:0003883">
    <property type="term" value="F:CTP synthase activity"/>
    <property type="evidence" value="ECO:0007669"/>
    <property type="project" value="UniProtKB-UniRule"/>
</dbReference>
<dbReference type="GO" id="GO:0004359">
    <property type="term" value="F:glutaminase activity"/>
    <property type="evidence" value="ECO:0007669"/>
    <property type="project" value="RHEA"/>
</dbReference>
<dbReference type="GO" id="GO:0042802">
    <property type="term" value="F:identical protein binding"/>
    <property type="evidence" value="ECO:0007669"/>
    <property type="project" value="TreeGrafter"/>
</dbReference>
<dbReference type="GO" id="GO:0046872">
    <property type="term" value="F:metal ion binding"/>
    <property type="evidence" value="ECO:0007669"/>
    <property type="project" value="UniProtKB-KW"/>
</dbReference>
<dbReference type="GO" id="GO:0044210">
    <property type="term" value="P:'de novo' CTP biosynthetic process"/>
    <property type="evidence" value="ECO:0007669"/>
    <property type="project" value="UniProtKB-UniRule"/>
</dbReference>
<dbReference type="GO" id="GO:0019856">
    <property type="term" value="P:pyrimidine nucleobase biosynthetic process"/>
    <property type="evidence" value="ECO:0007669"/>
    <property type="project" value="TreeGrafter"/>
</dbReference>
<dbReference type="CDD" id="cd03113">
    <property type="entry name" value="CTPS_N"/>
    <property type="match status" value="1"/>
</dbReference>
<dbReference type="CDD" id="cd01746">
    <property type="entry name" value="GATase1_CTP_Synthase"/>
    <property type="match status" value="1"/>
</dbReference>
<dbReference type="FunFam" id="3.40.50.300:FF:000009">
    <property type="entry name" value="CTP synthase"/>
    <property type="match status" value="1"/>
</dbReference>
<dbReference type="FunFam" id="3.40.50.880:FF:000002">
    <property type="entry name" value="CTP synthase"/>
    <property type="match status" value="1"/>
</dbReference>
<dbReference type="Gene3D" id="3.40.50.880">
    <property type="match status" value="1"/>
</dbReference>
<dbReference type="Gene3D" id="3.40.50.300">
    <property type="entry name" value="P-loop containing nucleotide triphosphate hydrolases"/>
    <property type="match status" value="1"/>
</dbReference>
<dbReference type="HAMAP" id="MF_01227">
    <property type="entry name" value="PyrG"/>
    <property type="match status" value="1"/>
</dbReference>
<dbReference type="InterPro" id="IPR029062">
    <property type="entry name" value="Class_I_gatase-like"/>
</dbReference>
<dbReference type="InterPro" id="IPR004468">
    <property type="entry name" value="CTP_synthase"/>
</dbReference>
<dbReference type="InterPro" id="IPR017456">
    <property type="entry name" value="CTP_synthase_N"/>
</dbReference>
<dbReference type="InterPro" id="IPR017926">
    <property type="entry name" value="GATASE"/>
</dbReference>
<dbReference type="InterPro" id="IPR033828">
    <property type="entry name" value="GATase1_CTP_Synthase"/>
</dbReference>
<dbReference type="InterPro" id="IPR027417">
    <property type="entry name" value="P-loop_NTPase"/>
</dbReference>
<dbReference type="NCBIfam" id="NF003792">
    <property type="entry name" value="PRK05380.1"/>
    <property type="match status" value="1"/>
</dbReference>
<dbReference type="NCBIfam" id="TIGR00337">
    <property type="entry name" value="PyrG"/>
    <property type="match status" value="1"/>
</dbReference>
<dbReference type="PANTHER" id="PTHR11550">
    <property type="entry name" value="CTP SYNTHASE"/>
    <property type="match status" value="1"/>
</dbReference>
<dbReference type="PANTHER" id="PTHR11550:SF0">
    <property type="entry name" value="CTP SYNTHASE-RELATED"/>
    <property type="match status" value="1"/>
</dbReference>
<dbReference type="Pfam" id="PF06418">
    <property type="entry name" value="CTP_synth_N"/>
    <property type="match status" value="1"/>
</dbReference>
<dbReference type="Pfam" id="PF00117">
    <property type="entry name" value="GATase"/>
    <property type="match status" value="1"/>
</dbReference>
<dbReference type="SUPFAM" id="SSF52317">
    <property type="entry name" value="Class I glutamine amidotransferase-like"/>
    <property type="match status" value="1"/>
</dbReference>
<dbReference type="SUPFAM" id="SSF52540">
    <property type="entry name" value="P-loop containing nucleoside triphosphate hydrolases"/>
    <property type="match status" value="1"/>
</dbReference>
<dbReference type="PROSITE" id="PS51273">
    <property type="entry name" value="GATASE_TYPE_1"/>
    <property type="match status" value="1"/>
</dbReference>
<sequence length="594" mass="66333">MARPKNVKYVFVTGGVVSSLGKGILSASLGMLLKSRGLRVAIQKYDPYINVDPGTMSPYQHGEVYVTDDGAETDLDLGHYERFLNESTSQASNLTMGRVYKSVIDKERRGAYLGGTVQVVPHVIDEIKDRLAELAKNGNYDVIITEIGGTIGDIESLPFLEAMRQMKLDMGDRNLLNIHLTFVPYIRAASELKTKPTQHSVKMLLETGIQPDILVCRSEKPLSSEIKRKVGHFCNVNNLDVIGLNDCDTIYEVPLTLLQEQLDLRVLKKLGLKKFKEPDLVYWREFCNKVKHPTSGEVTIVVCGKYTEYPDAYKSILEAFIHAGASNDVKVHVRLIGAEAAENEAYDFARELEGVHGILVAPGFGDRGIEGKVAFIRYAREQGIPFFGICLGMQCASVEFARNVCNLAEANSTEFNKRARYPVIDLMEQQKKVKEKGGTMRLGSYPCIIKEGTKANEVYGKFLINERHRHRFEFNNAYRETFEEHGMVFSGTSPNGELVEIIEIKDHPWFVAVQFHPELKSRVQAVHPLFHGFVGAAKSYAAVGHQPELAAIEPHFMPEPTAEAYAAYSEESSAESKSFFPDNGGHDEERDSGQ</sequence>